<comment type="induction">
    <text evidence="2">Up-regulated by phagocytic stimuli.</text>
</comment>
<proteinExistence type="evidence at transcript level"/>
<accession>Q54F65</accession>
<reference key="1">
    <citation type="journal article" date="2005" name="Nature">
        <title>The genome of the social amoeba Dictyostelium discoideum.</title>
        <authorList>
            <person name="Eichinger L."/>
            <person name="Pachebat J.A."/>
            <person name="Gloeckner G."/>
            <person name="Rajandream M.A."/>
            <person name="Sucgang R."/>
            <person name="Berriman M."/>
            <person name="Song J."/>
            <person name="Olsen R."/>
            <person name="Szafranski K."/>
            <person name="Xu Q."/>
            <person name="Tunggal B."/>
            <person name="Kummerfeld S."/>
            <person name="Madera M."/>
            <person name="Konfortov B.A."/>
            <person name="Rivero F."/>
            <person name="Bankier A.T."/>
            <person name="Lehmann R."/>
            <person name="Hamlin N."/>
            <person name="Davies R."/>
            <person name="Gaudet P."/>
            <person name="Fey P."/>
            <person name="Pilcher K."/>
            <person name="Chen G."/>
            <person name="Saunders D."/>
            <person name="Sodergren E.J."/>
            <person name="Davis P."/>
            <person name="Kerhornou A."/>
            <person name="Nie X."/>
            <person name="Hall N."/>
            <person name="Anjard C."/>
            <person name="Hemphill L."/>
            <person name="Bason N."/>
            <person name="Farbrother P."/>
            <person name="Desany B."/>
            <person name="Just E."/>
            <person name="Morio T."/>
            <person name="Rost R."/>
            <person name="Churcher C.M."/>
            <person name="Cooper J."/>
            <person name="Haydock S."/>
            <person name="van Driessche N."/>
            <person name="Cronin A."/>
            <person name="Goodhead I."/>
            <person name="Muzny D.M."/>
            <person name="Mourier T."/>
            <person name="Pain A."/>
            <person name="Lu M."/>
            <person name="Harper D."/>
            <person name="Lindsay R."/>
            <person name="Hauser H."/>
            <person name="James K.D."/>
            <person name="Quiles M."/>
            <person name="Madan Babu M."/>
            <person name="Saito T."/>
            <person name="Buchrieser C."/>
            <person name="Wardroper A."/>
            <person name="Felder M."/>
            <person name="Thangavelu M."/>
            <person name="Johnson D."/>
            <person name="Knights A."/>
            <person name="Loulseged H."/>
            <person name="Mungall K.L."/>
            <person name="Oliver K."/>
            <person name="Price C."/>
            <person name="Quail M.A."/>
            <person name="Urushihara H."/>
            <person name="Hernandez J."/>
            <person name="Rabbinowitsch E."/>
            <person name="Steffen D."/>
            <person name="Sanders M."/>
            <person name="Ma J."/>
            <person name="Kohara Y."/>
            <person name="Sharp S."/>
            <person name="Simmonds M.N."/>
            <person name="Spiegler S."/>
            <person name="Tivey A."/>
            <person name="Sugano S."/>
            <person name="White B."/>
            <person name="Walker D."/>
            <person name="Woodward J.R."/>
            <person name="Winckler T."/>
            <person name="Tanaka Y."/>
            <person name="Shaulsky G."/>
            <person name="Schleicher M."/>
            <person name="Weinstock G.M."/>
            <person name="Rosenthal A."/>
            <person name="Cox E.C."/>
            <person name="Chisholm R.L."/>
            <person name="Gibbs R.A."/>
            <person name="Loomis W.F."/>
            <person name="Platzer M."/>
            <person name="Kay R.R."/>
            <person name="Williams J.G."/>
            <person name="Dear P.H."/>
            <person name="Noegel A.A."/>
            <person name="Barrell B.G."/>
            <person name="Kuspa A."/>
        </authorList>
    </citation>
    <scope>NUCLEOTIDE SEQUENCE [LARGE SCALE GENOMIC DNA]</scope>
    <source>
        <strain>AX4</strain>
    </source>
</reference>
<reference key="2">
    <citation type="journal article" date="2008" name="BMC Genomics">
        <title>Genome-wide transcriptional changes induced by phagocytosis or growth on bacteria in Dictyostelium.</title>
        <authorList>
            <person name="Sillo A."/>
            <person name="Bloomfield G."/>
            <person name="Balest A."/>
            <person name="Balbo A."/>
            <person name="Pergolizzi B."/>
            <person name="Peracino B."/>
            <person name="Skelton J."/>
            <person name="Ivens A."/>
            <person name="Bozzaro S."/>
        </authorList>
    </citation>
    <scope>INDUCTION [LARGE SCALE ANALYSIS]</scope>
</reference>
<evidence type="ECO:0000255" key="1">
    <source>
        <dbReference type="PROSITE-ProRule" id="PRU00204"/>
    </source>
</evidence>
<evidence type="ECO:0000269" key="2">
    <source>
    </source>
</evidence>
<keyword id="KW-1185">Reference proteome</keyword>
<organism>
    <name type="scientific">Dictyostelium discoideum</name>
    <name type="common">Social amoeba</name>
    <dbReference type="NCBI Taxonomy" id="44689"/>
    <lineage>
        <taxon>Eukaryota</taxon>
        <taxon>Amoebozoa</taxon>
        <taxon>Evosea</taxon>
        <taxon>Eumycetozoa</taxon>
        <taxon>Dictyostelia</taxon>
        <taxon>Dictyosteliales</taxon>
        <taxon>Dictyosteliaceae</taxon>
        <taxon>Dictyostelium</taxon>
    </lineage>
</organism>
<sequence>MNSNIIKSIDIIPNNNNNNNNSVSTVNTNSSVINNNNNNNYNNNSISNGNNERIKVFIVHGHNNIVREKVSKFLFEMGFEPILLFEKPNNGQTIIEKLEKEISNCKFGIVIMSPDNKAFTKKDSNSDYVEIAYPRLNVVFEFGYLIGKFGRSNVIYLSVPYNGKSQNYDLPSDLLGYVWINYTEDLKELENEINFGNYKKL</sequence>
<gene>
    <name type="primary">tirC</name>
    <name type="ORF">DDB_G0291083</name>
</gene>
<dbReference type="EMBL" id="AAFI02000175">
    <property type="protein sequence ID" value="EAL61889.1"/>
    <property type="molecule type" value="Genomic_DNA"/>
</dbReference>
<dbReference type="RefSeq" id="XP_635389.1">
    <property type="nucleotide sequence ID" value="XM_630297.1"/>
</dbReference>
<dbReference type="SMR" id="Q54F65"/>
<dbReference type="STRING" id="44689.Q54F65"/>
<dbReference type="PaxDb" id="44689-DDB0189226"/>
<dbReference type="EnsemblProtists" id="EAL61889">
    <property type="protein sequence ID" value="EAL61889"/>
    <property type="gene ID" value="DDB_G0291083"/>
</dbReference>
<dbReference type="GeneID" id="8627973"/>
<dbReference type="KEGG" id="ddi:DDB_G0291083"/>
<dbReference type="dictyBase" id="DDB_G0291083"/>
<dbReference type="VEuPathDB" id="AmoebaDB:DDB_G0291083"/>
<dbReference type="eggNOG" id="ENOG502RHG0">
    <property type="taxonomic scope" value="Eukaryota"/>
</dbReference>
<dbReference type="HOGENOM" id="CLU_1382021_0_0_1"/>
<dbReference type="InParanoid" id="Q54F65"/>
<dbReference type="OMA" id="LGYVWIN"/>
<dbReference type="PhylomeDB" id="Q54F65"/>
<dbReference type="PRO" id="PR:Q54F65"/>
<dbReference type="Proteomes" id="UP000002195">
    <property type="component" value="Chromosome 5"/>
</dbReference>
<dbReference type="GO" id="GO:0050135">
    <property type="term" value="F:NADP+ nucleosidase activity"/>
    <property type="evidence" value="ECO:0007669"/>
    <property type="project" value="InterPro"/>
</dbReference>
<dbReference type="GO" id="GO:0007165">
    <property type="term" value="P:signal transduction"/>
    <property type="evidence" value="ECO:0007669"/>
    <property type="project" value="InterPro"/>
</dbReference>
<dbReference type="Gene3D" id="3.40.50.10140">
    <property type="entry name" value="Toll/interleukin-1 receptor homology (TIR) domain"/>
    <property type="match status" value="1"/>
</dbReference>
<dbReference type="InterPro" id="IPR019302">
    <property type="entry name" value="CAP12/PCTIR_TIR_dom"/>
</dbReference>
<dbReference type="InterPro" id="IPR000157">
    <property type="entry name" value="TIR_dom"/>
</dbReference>
<dbReference type="InterPro" id="IPR035897">
    <property type="entry name" value="Toll_tir_struct_dom_sf"/>
</dbReference>
<dbReference type="Pfam" id="PF10137">
    <property type="entry name" value="CAP12-PCTIR_TIR"/>
    <property type="match status" value="1"/>
</dbReference>
<dbReference type="SUPFAM" id="SSF52200">
    <property type="entry name" value="Toll/Interleukin receptor TIR domain"/>
    <property type="match status" value="1"/>
</dbReference>
<dbReference type="PROSITE" id="PS50104">
    <property type="entry name" value="TIR"/>
    <property type="match status" value="1"/>
</dbReference>
<name>TIRC_DICDI</name>
<protein>
    <recommendedName>
        <fullName>Protein tirC</fullName>
    </recommendedName>
    <alternativeName>
        <fullName>TIR domain-containing protein C</fullName>
    </alternativeName>
</protein>
<feature type="chain" id="PRO_0000384458" description="Protein tirC">
    <location>
        <begin position="1"/>
        <end position="201"/>
    </location>
</feature>
<feature type="domain" description="TIR" evidence="1">
    <location>
        <begin position="52"/>
        <end position="186"/>
    </location>
</feature>